<sequence>MGTDTVMSGRVRKDLSKTNPNGNIPENRSNSRKKIQRRSKKTLICPVQKLFDTCKKVFADGKSGTVPSQENIEMLRAVLDEIKPEDVGVNPKMSYFRSTVTGRSPLVTYLHIYACHRFSICIFCLPPSGVIPLHNHPEMTVFSKLLFGTMHIKSYDWVPDSPQPSSDTRLAKVKVDSDFTAPCDTSILYPADGGNMHCFTAKTACAVLDVIGPPYSDPAGRHCTYYFDYPFSSFSVDGVVVAEEEKEGYAWLKEREEKPEDLTVTALMYSGPTIKE</sequence>
<proteinExistence type="evidence at protein level"/>
<feature type="chain" id="PRO_0000432450" description="Plant cysteine oxidase 2">
    <location>
        <begin position="1"/>
        <end position="276"/>
    </location>
</feature>
<feature type="region of interest" description="Disordered" evidence="1">
    <location>
        <begin position="1"/>
        <end position="40"/>
    </location>
</feature>
<feature type="compositionally biased region" description="Polar residues" evidence="1">
    <location>
        <begin position="17"/>
        <end position="28"/>
    </location>
</feature>
<feature type="compositionally biased region" description="Basic residues" evidence="1">
    <location>
        <begin position="30"/>
        <end position="40"/>
    </location>
</feature>
<feature type="binding site" evidence="5 13">
    <location>
        <position position="134"/>
    </location>
    <ligand>
        <name>Fe cation</name>
        <dbReference type="ChEBI" id="CHEBI:24875"/>
        <note>catalytic</note>
    </ligand>
</feature>
<feature type="binding site" evidence="5 13">
    <location>
        <position position="136"/>
    </location>
    <ligand>
        <name>Fe cation</name>
        <dbReference type="ChEBI" id="CHEBI:24875"/>
        <note>catalytic</note>
    </ligand>
</feature>
<feature type="binding site" evidence="5 13">
    <location>
        <position position="197"/>
    </location>
    <ligand>
        <name>Fe cation</name>
        <dbReference type="ChEBI" id="CHEBI:24875"/>
        <note>catalytic</note>
    </ligand>
</feature>
<feature type="helix" evidence="14">
    <location>
        <begin position="48"/>
        <end position="57"/>
    </location>
</feature>
<feature type="strand" evidence="14">
    <location>
        <begin position="60"/>
        <end position="62"/>
    </location>
</feature>
<feature type="helix" evidence="14">
    <location>
        <begin position="69"/>
        <end position="80"/>
    </location>
</feature>
<feature type="helix" evidence="14">
    <location>
        <begin position="84"/>
        <end position="87"/>
    </location>
</feature>
<feature type="helix" evidence="14">
    <location>
        <begin position="94"/>
        <end position="96"/>
    </location>
</feature>
<feature type="strand" evidence="14">
    <location>
        <begin position="108"/>
        <end position="114"/>
    </location>
</feature>
<feature type="strand" evidence="14">
    <location>
        <begin position="119"/>
        <end position="125"/>
    </location>
</feature>
<feature type="strand" evidence="14">
    <location>
        <begin position="130"/>
        <end position="134"/>
    </location>
</feature>
<feature type="strand" evidence="14">
    <location>
        <begin position="140"/>
        <end position="157"/>
    </location>
</feature>
<feature type="strand" evidence="14">
    <location>
        <begin position="168"/>
        <end position="182"/>
    </location>
</feature>
<feature type="strand" evidence="14">
    <location>
        <begin position="186"/>
        <end position="189"/>
    </location>
</feature>
<feature type="strand" evidence="14">
    <location>
        <begin position="195"/>
        <end position="203"/>
    </location>
</feature>
<feature type="strand" evidence="14">
    <location>
        <begin position="205"/>
        <end position="213"/>
    </location>
</feature>
<feature type="turn" evidence="14">
    <location>
        <begin position="217"/>
        <end position="220"/>
    </location>
</feature>
<feature type="strand" evidence="14">
    <location>
        <begin position="225"/>
        <end position="230"/>
    </location>
</feature>
<feature type="helix" evidence="14">
    <location>
        <begin position="231"/>
        <end position="233"/>
    </location>
</feature>
<feature type="helix" evidence="14">
    <location>
        <begin position="243"/>
        <end position="248"/>
    </location>
</feature>
<feature type="strand" evidence="14">
    <location>
        <begin position="249"/>
        <end position="255"/>
    </location>
</feature>
<feature type="helix" evidence="14">
    <location>
        <begin position="259"/>
        <end position="261"/>
    </location>
</feature>
<comment type="function">
    <text evidence="3 4 5 10">Catalyzes the oxidation of N-terminal cysteine residues (N-Cys), thus preparing the protein for N-end rule pathway-mediated proteasomal degradation, upstream of the N-end rule enzymes ATE1, ATE2 and PRT6 (PubMed:24599061, PubMed:29848548, PubMed:33207269). Controls the preparation of the group VII ethylene response factor (ERF-VII) proteins for degradation via the 26S proteasome N-end rule pathway (PubMed:24599061, PubMed:29848548, PubMed:33207269). Acts as an oxygen sensor that controls the stability of ERF-VII proteins, which are stabilized in flooding-induced hypoxia, and regulate transcriptional adaptation to these adverse conditions (Probable) (PubMed:29848548). Not active on Cys located inside or at the C-terminus of a peptide (PubMed:24599061). Acts redundantly with PCO1 to repress the anaerobic response (PubMed:24599061).</text>
</comment>
<comment type="catalytic activity">
    <reaction evidence="3 4 5">
        <text>L-cysteine + O2 = 3-sulfino-L-alanine + H(+)</text>
        <dbReference type="Rhea" id="RHEA:20441"/>
        <dbReference type="ChEBI" id="CHEBI:15378"/>
        <dbReference type="ChEBI" id="CHEBI:15379"/>
        <dbReference type="ChEBI" id="CHEBI:35235"/>
        <dbReference type="ChEBI" id="CHEBI:61085"/>
        <dbReference type="EC" id="1.13.11.20"/>
    </reaction>
    <physiologicalReaction direction="left-to-right" evidence="3 4 5">
        <dbReference type="Rhea" id="RHEA:20442"/>
    </physiologicalReaction>
</comment>
<comment type="cofactor">
    <cofactor evidence="5">
        <name>Fe(2+)</name>
        <dbReference type="ChEBI" id="CHEBI:29033"/>
    </cofactor>
    <text evidence="5">Binds 1 Fe(2+) cation per subunit.</text>
</comment>
<comment type="biophysicochemical properties">
    <kinetics>
        <KM evidence="4">0.09 mM for CGGAIISDFIPPPR peptide</KM>
        <Vmax evidence="4">3.45 umol/min/mg enzyme with CGGAIISDFIPPPR peptide as substrate</Vmax>
        <text evidence="4">kcat is 1.98 sec(-1) with CGGAIISDFIPPPR peptide as substrate.</text>
    </kinetics>
    <phDependence>
        <text evidence="4">Optimum pH is 8.5 with CGGAIISDFIPPPR peptide as substrate.</text>
    </phDependence>
</comment>
<comment type="subcellular location">
    <subcellularLocation>
        <location evidence="3">Nucleus</location>
    </subcellularLocation>
    <subcellularLocation>
        <location evidence="3">Cytoplasm</location>
    </subcellularLocation>
</comment>
<comment type="developmental stage">
    <text evidence="3">Expressed throughout development, with the highest expression in mature siliques and during seed germination.</text>
</comment>
<comment type="induction">
    <text evidence="2 3">Up-regulated by hypoxia (PubMed:20097791). Up-regulated by the ERF-VII transcription factor RAP2-12 during hypoxia.</text>
</comment>
<comment type="similarity">
    <text evidence="9">Belongs to the cysteine dioxygenase family.</text>
</comment>
<comment type="sequence caution" evidence="9">
    <conflict type="erroneous initiation">
        <sequence resource="EMBL-CDS" id="BAB10214"/>
    </conflict>
    <text>Truncated N-terminus.</text>
</comment>
<protein>
    <recommendedName>
        <fullName evidence="7">Plant cysteine oxidase 2</fullName>
        <shortName evidence="8">AtPCO2</shortName>
        <ecNumber evidence="3 4 5">1.13.11.20</ecNumber>
    </recommendedName>
    <alternativeName>
        <fullName evidence="6">Hypoxia-responsive unknown protein 43</fullName>
    </alternativeName>
</protein>
<accession>Q8LGJ5</accession>
<accession>Q9FLE5</accession>
<reference key="1">
    <citation type="journal article" date="1998" name="DNA Res.">
        <title>Structural analysis of Arabidopsis thaliana chromosome 5. IV. Sequence features of the regions of 1,456,315 bp covered by nineteen physically assigned P1 and TAC clones.</title>
        <authorList>
            <person name="Sato S."/>
            <person name="Kaneko T."/>
            <person name="Kotani H."/>
            <person name="Nakamura Y."/>
            <person name="Asamizu E."/>
            <person name="Miyajima N."/>
            <person name="Tabata S."/>
        </authorList>
    </citation>
    <scope>NUCLEOTIDE SEQUENCE [LARGE SCALE GENOMIC DNA]</scope>
    <source>
        <strain>cv. Columbia</strain>
    </source>
</reference>
<reference key="2">
    <citation type="journal article" date="2017" name="Plant J.">
        <title>Araport11: a complete reannotation of the Arabidopsis thaliana reference genome.</title>
        <authorList>
            <person name="Cheng C.Y."/>
            <person name="Krishnakumar V."/>
            <person name="Chan A.P."/>
            <person name="Thibaud-Nissen F."/>
            <person name="Schobel S."/>
            <person name="Town C.D."/>
        </authorList>
    </citation>
    <scope>GENOME REANNOTATION</scope>
    <source>
        <strain>cv. Columbia</strain>
    </source>
</reference>
<reference key="3">
    <citation type="journal article" date="2003" name="Science">
        <title>Empirical analysis of transcriptional activity in the Arabidopsis genome.</title>
        <authorList>
            <person name="Yamada K."/>
            <person name="Lim J."/>
            <person name="Dale J.M."/>
            <person name="Chen H."/>
            <person name="Shinn P."/>
            <person name="Palm C.J."/>
            <person name="Southwick A.M."/>
            <person name="Wu H.C."/>
            <person name="Kim C.J."/>
            <person name="Nguyen M."/>
            <person name="Pham P.K."/>
            <person name="Cheuk R.F."/>
            <person name="Karlin-Newmann G."/>
            <person name="Liu S.X."/>
            <person name="Lam B."/>
            <person name="Sakano H."/>
            <person name="Wu T."/>
            <person name="Yu G."/>
            <person name="Miranda M."/>
            <person name="Quach H.L."/>
            <person name="Tripp M."/>
            <person name="Chang C.H."/>
            <person name="Lee J.M."/>
            <person name="Toriumi M.J."/>
            <person name="Chan M.M."/>
            <person name="Tang C.C."/>
            <person name="Onodera C.S."/>
            <person name="Deng J.M."/>
            <person name="Akiyama K."/>
            <person name="Ansari Y."/>
            <person name="Arakawa T."/>
            <person name="Banh J."/>
            <person name="Banno F."/>
            <person name="Bowser L."/>
            <person name="Brooks S.Y."/>
            <person name="Carninci P."/>
            <person name="Chao Q."/>
            <person name="Choy N."/>
            <person name="Enju A."/>
            <person name="Goldsmith A.D."/>
            <person name="Gurjal M."/>
            <person name="Hansen N.F."/>
            <person name="Hayashizaki Y."/>
            <person name="Johnson-Hopson C."/>
            <person name="Hsuan V.W."/>
            <person name="Iida K."/>
            <person name="Karnes M."/>
            <person name="Khan S."/>
            <person name="Koesema E."/>
            <person name="Ishida J."/>
            <person name="Jiang P.X."/>
            <person name="Jones T."/>
            <person name="Kawai J."/>
            <person name="Kamiya A."/>
            <person name="Meyers C."/>
            <person name="Nakajima M."/>
            <person name="Narusaka M."/>
            <person name="Seki M."/>
            <person name="Sakurai T."/>
            <person name="Satou M."/>
            <person name="Tamse R."/>
            <person name="Vaysberg M."/>
            <person name="Wallender E.K."/>
            <person name="Wong C."/>
            <person name="Yamamura Y."/>
            <person name="Yuan S."/>
            <person name="Shinozaki K."/>
            <person name="Davis R.W."/>
            <person name="Theologis A."/>
            <person name="Ecker J.R."/>
        </authorList>
    </citation>
    <scope>NUCLEOTIDE SEQUENCE [LARGE SCALE MRNA]</scope>
    <source>
        <strain>cv. Columbia</strain>
    </source>
</reference>
<reference key="4">
    <citation type="submission" date="2006-07" db="EMBL/GenBank/DDBJ databases">
        <title>Large-scale analysis of RIKEN Arabidopsis full-length (RAFL) cDNAs.</title>
        <authorList>
            <person name="Totoki Y."/>
            <person name="Seki M."/>
            <person name="Ishida J."/>
            <person name="Nakajima M."/>
            <person name="Enju A."/>
            <person name="Kamiya A."/>
            <person name="Narusaka M."/>
            <person name="Shin-i T."/>
            <person name="Nakagawa M."/>
            <person name="Sakamoto N."/>
            <person name="Oishi K."/>
            <person name="Kohara Y."/>
            <person name="Kobayashi M."/>
            <person name="Toyoda A."/>
            <person name="Sakaki Y."/>
            <person name="Sakurai T."/>
            <person name="Iida K."/>
            <person name="Akiyama K."/>
            <person name="Satou M."/>
            <person name="Toyoda T."/>
            <person name="Konagaya A."/>
            <person name="Carninci P."/>
            <person name="Kawai J."/>
            <person name="Hayashizaki Y."/>
            <person name="Shinozaki K."/>
        </authorList>
    </citation>
    <scope>NUCLEOTIDE SEQUENCE [LARGE SCALE MRNA]</scope>
    <source>
        <strain>cv. Columbia</strain>
    </source>
</reference>
<reference key="5">
    <citation type="submission" date="2002-03" db="EMBL/GenBank/DDBJ databases">
        <title>Full-length cDNA from Arabidopsis thaliana.</title>
        <authorList>
            <person name="Brover V.V."/>
            <person name="Troukhan M.E."/>
            <person name="Alexandrov N.A."/>
            <person name="Lu Y.-P."/>
            <person name="Flavell R.B."/>
            <person name="Feldmann K.A."/>
        </authorList>
    </citation>
    <scope>NUCLEOTIDE SEQUENCE [LARGE SCALE MRNA]</scope>
</reference>
<reference key="6">
    <citation type="journal article" date="2010" name="Plant Physiol.">
        <title>Cross-kingdom comparison of transcriptomic adjustments to low-oxygen stress highlights conserved and plant-specific responses.</title>
        <authorList>
            <person name="Mustroph A."/>
            <person name="Lee S.C."/>
            <person name="Oosumi T."/>
            <person name="Zanetti M.E."/>
            <person name="Yang H."/>
            <person name="Ma K."/>
            <person name="Yaghoubi-Masihi A."/>
            <person name="Fukao T."/>
            <person name="Bailey-Serres J."/>
        </authorList>
    </citation>
    <scope>INDUCTION BY HYPOXIA</scope>
</reference>
<reference key="7">
    <citation type="journal article" date="2014" name="Nat. Commun.">
        <title>Plant cysteine oxidases control the oxygen-dependent branch of the N-end-rule pathway.</title>
        <authorList>
            <person name="Weits D.A."/>
            <person name="Giuntoli B."/>
            <person name="Kosmacz M."/>
            <person name="Parlanti S."/>
            <person name="Hubberten H.M."/>
            <person name="Riegler H."/>
            <person name="Hoefgen R."/>
            <person name="Perata P."/>
            <person name="van Dongen J.T."/>
            <person name="Licausi F."/>
        </authorList>
    </citation>
    <scope>FUNCTION</scope>
    <scope>CATALYTIC ACTIVITY</scope>
    <scope>INDUCTION</scope>
    <scope>GENE FAMILY</scope>
    <scope>NOMENCLATURE</scope>
    <scope>SUBCELLULAR LOCATION</scope>
    <scope>DEVELOPMENTAL STAGE</scope>
</reference>
<reference key="8">
    <citation type="journal article" date="2018" name="J. Biol. Chem.">
        <title>The plant cysteine oxidases from Arabidopsis thaliana are kinetically tailored to act as oxygen sensors.</title>
        <authorList>
            <person name="White M.D."/>
            <person name="Kamps J.J.A.G."/>
            <person name="East S."/>
            <person name="Taylor Kearney L.J."/>
            <person name="Flashman E."/>
        </authorList>
    </citation>
    <scope>FUNCTION</scope>
    <scope>CATALYTIC ACTIVITY</scope>
    <scope>BIOPHYSICOCHEMICAL PROPERTIES</scope>
</reference>
<reference key="9">
    <citation type="journal article" date="2020" name="J. Struct. Biol.">
        <title>Molecular basis for cysteine oxidation by plant cysteine oxidases from Arabidopsis thaliana.</title>
        <authorList>
            <person name="Chen Z."/>
            <person name="Guo Q."/>
            <person name="Wu G."/>
            <person name="Wen J."/>
            <person name="Liao S."/>
            <person name="Xu C."/>
        </authorList>
    </citation>
    <scope>X-RAY CRYSTALLOGRAPHY (1.56 ANGSTROMS) OF 48-276 IN COMPLEX WITH IRON IONS</scope>
    <scope>FUNCTION</scope>
    <scope>CATALYTIC ACTIVITY</scope>
    <scope>COFACTOR</scope>
</reference>
<evidence type="ECO:0000256" key="1">
    <source>
        <dbReference type="SAM" id="MobiDB-lite"/>
    </source>
</evidence>
<evidence type="ECO:0000269" key="2">
    <source>
    </source>
</evidence>
<evidence type="ECO:0000269" key="3">
    <source>
    </source>
</evidence>
<evidence type="ECO:0000269" key="4">
    <source>
    </source>
</evidence>
<evidence type="ECO:0000269" key="5">
    <source>
    </source>
</evidence>
<evidence type="ECO:0000303" key="6">
    <source>
    </source>
</evidence>
<evidence type="ECO:0000303" key="7">
    <source>
    </source>
</evidence>
<evidence type="ECO:0000303" key="8">
    <source>
    </source>
</evidence>
<evidence type="ECO:0000305" key="9"/>
<evidence type="ECO:0000305" key="10">
    <source>
    </source>
</evidence>
<evidence type="ECO:0000312" key="11">
    <source>
        <dbReference type="Araport" id="AT5G39890"/>
    </source>
</evidence>
<evidence type="ECO:0000312" key="12">
    <source>
        <dbReference type="EMBL" id="BAB10214.1"/>
    </source>
</evidence>
<evidence type="ECO:0007744" key="13">
    <source>
        <dbReference type="PDB" id="7CXZ"/>
    </source>
</evidence>
<evidence type="ECO:0007829" key="14">
    <source>
        <dbReference type="PDB" id="7CXZ"/>
    </source>
</evidence>
<name>PCO2_ARATH</name>
<keyword id="KW-0002">3D-structure</keyword>
<keyword id="KW-0963">Cytoplasm</keyword>
<keyword id="KW-0408">Iron</keyword>
<keyword id="KW-0479">Metal-binding</keyword>
<keyword id="KW-0539">Nucleus</keyword>
<keyword id="KW-0560">Oxidoreductase</keyword>
<keyword id="KW-1185">Reference proteome</keyword>
<gene>
    <name evidence="7" type="primary">PCO2</name>
    <name evidence="6" type="synonym">HUP43</name>
    <name evidence="11" type="ordered locus">At5g39890</name>
    <name evidence="12" type="ORF">MYH19.8</name>
</gene>
<dbReference type="EC" id="1.13.11.20" evidence="3 4 5"/>
<dbReference type="EMBL" id="AB010077">
    <property type="protein sequence ID" value="BAB10214.1"/>
    <property type="status" value="ALT_INIT"/>
    <property type="molecule type" value="Genomic_DNA"/>
</dbReference>
<dbReference type="EMBL" id="CP002688">
    <property type="protein sequence ID" value="AED94488.1"/>
    <property type="molecule type" value="Genomic_DNA"/>
</dbReference>
<dbReference type="EMBL" id="BT003127">
    <property type="protein sequence ID" value="AAO24559.1"/>
    <property type="molecule type" value="mRNA"/>
</dbReference>
<dbReference type="EMBL" id="AK228134">
    <property type="protein sequence ID" value="BAF00091.1"/>
    <property type="molecule type" value="mRNA"/>
</dbReference>
<dbReference type="EMBL" id="AY084237">
    <property type="protein sequence ID" value="AAM60834.1"/>
    <property type="molecule type" value="mRNA"/>
</dbReference>
<dbReference type="RefSeq" id="NP_198805.1">
    <property type="nucleotide sequence ID" value="NM_123352.3"/>
</dbReference>
<dbReference type="PDB" id="7CXZ">
    <property type="method" value="X-ray"/>
    <property type="resolution" value="1.56 A"/>
    <property type="chains" value="A=48-276"/>
</dbReference>
<dbReference type="PDBsum" id="7CXZ"/>
<dbReference type="SMR" id="Q8LGJ5"/>
<dbReference type="FunCoup" id="Q8LGJ5">
    <property type="interactions" value="1838"/>
</dbReference>
<dbReference type="STRING" id="3702.Q8LGJ5"/>
<dbReference type="iPTMnet" id="Q8LGJ5"/>
<dbReference type="PaxDb" id="3702-AT5G39890.1"/>
<dbReference type="ProteomicsDB" id="236362"/>
<dbReference type="EnsemblPlants" id="AT5G39890.1">
    <property type="protein sequence ID" value="AT5G39890.1"/>
    <property type="gene ID" value="AT5G39890"/>
</dbReference>
<dbReference type="GeneID" id="833986"/>
<dbReference type="Gramene" id="AT5G39890.1">
    <property type="protein sequence ID" value="AT5G39890.1"/>
    <property type="gene ID" value="AT5G39890"/>
</dbReference>
<dbReference type="KEGG" id="ath:AT5G39890"/>
<dbReference type="Araport" id="AT5G39890"/>
<dbReference type="TAIR" id="AT5G39890">
    <property type="gene designation" value="PCO2"/>
</dbReference>
<dbReference type="eggNOG" id="KOG4281">
    <property type="taxonomic scope" value="Eukaryota"/>
</dbReference>
<dbReference type="HOGENOM" id="CLU_061320_4_1_1"/>
<dbReference type="InParanoid" id="Q8LGJ5"/>
<dbReference type="OrthoDB" id="271433at2759"/>
<dbReference type="PhylomeDB" id="Q8LGJ5"/>
<dbReference type="SABIO-RK" id="Q8LGJ5"/>
<dbReference type="PRO" id="PR:Q8LGJ5"/>
<dbReference type="Proteomes" id="UP000006548">
    <property type="component" value="Chromosome 5"/>
</dbReference>
<dbReference type="ExpressionAtlas" id="Q8LGJ5">
    <property type="expression patterns" value="baseline and differential"/>
</dbReference>
<dbReference type="GO" id="GO:0005829">
    <property type="term" value="C:cytosol"/>
    <property type="evidence" value="ECO:0000314"/>
    <property type="project" value="TAIR"/>
</dbReference>
<dbReference type="GO" id="GO:0005634">
    <property type="term" value="C:nucleus"/>
    <property type="evidence" value="ECO:0000314"/>
    <property type="project" value="TAIR"/>
</dbReference>
<dbReference type="GO" id="GO:0017172">
    <property type="term" value="F:cysteine dioxygenase activity"/>
    <property type="evidence" value="ECO:0007669"/>
    <property type="project" value="UniProtKB-EC"/>
</dbReference>
<dbReference type="GO" id="GO:0005506">
    <property type="term" value="F:iron ion binding"/>
    <property type="evidence" value="ECO:0000314"/>
    <property type="project" value="UniProtKB"/>
</dbReference>
<dbReference type="GO" id="GO:0071456">
    <property type="term" value="P:cellular response to hypoxia"/>
    <property type="evidence" value="ECO:0007007"/>
    <property type="project" value="TAIR"/>
</dbReference>
<dbReference type="GO" id="GO:0070483">
    <property type="term" value="P:detection of hypoxia"/>
    <property type="evidence" value="ECO:0000315"/>
    <property type="project" value="TAIR"/>
</dbReference>
<dbReference type="GO" id="GO:0018171">
    <property type="term" value="P:peptidyl-cysteine oxidation"/>
    <property type="evidence" value="ECO:0000314"/>
    <property type="project" value="TAIR"/>
</dbReference>
<dbReference type="GO" id="GO:0001666">
    <property type="term" value="P:response to hypoxia"/>
    <property type="evidence" value="ECO:0000315"/>
    <property type="project" value="TAIR"/>
</dbReference>
<dbReference type="CDD" id="cd20289">
    <property type="entry name" value="cupin_ADO"/>
    <property type="match status" value="1"/>
</dbReference>
<dbReference type="FunFam" id="2.60.120.10:FF:000342">
    <property type="entry name" value="Plant cysteine oxidase 1"/>
    <property type="match status" value="1"/>
</dbReference>
<dbReference type="Gene3D" id="2.60.120.10">
    <property type="entry name" value="Jelly Rolls"/>
    <property type="match status" value="1"/>
</dbReference>
<dbReference type="InterPro" id="IPR012864">
    <property type="entry name" value="PCO/ADO"/>
</dbReference>
<dbReference type="InterPro" id="IPR014710">
    <property type="entry name" value="RmlC-like_jellyroll"/>
</dbReference>
<dbReference type="InterPro" id="IPR011051">
    <property type="entry name" value="RmlC_Cupin_sf"/>
</dbReference>
<dbReference type="PANTHER" id="PTHR22966">
    <property type="entry name" value="2-AMINOETHANETHIOL DIOXYGENASE"/>
    <property type="match status" value="1"/>
</dbReference>
<dbReference type="PANTHER" id="PTHR22966:SF65">
    <property type="entry name" value="PLANT CYSTEINE OXIDASE 2"/>
    <property type="match status" value="1"/>
</dbReference>
<dbReference type="Pfam" id="PF07847">
    <property type="entry name" value="PCO_ADO"/>
    <property type="match status" value="1"/>
</dbReference>
<dbReference type="SUPFAM" id="SSF51182">
    <property type="entry name" value="RmlC-like cupins"/>
    <property type="match status" value="1"/>
</dbReference>
<organism>
    <name type="scientific">Arabidopsis thaliana</name>
    <name type="common">Mouse-ear cress</name>
    <dbReference type="NCBI Taxonomy" id="3702"/>
    <lineage>
        <taxon>Eukaryota</taxon>
        <taxon>Viridiplantae</taxon>
        <taxon>Streptophyta</taxon>
        <taxon>Embryophyta</taxon>
        <taxon>Tracheophyta</taxon>
        <taxon>Spermatophyta</taxon>
        <taxon>Magnoliopsida</taxon>
        <taxon>eudicotyledons</taxon>
        <taxon>Gunneridae</taxon>
        <taxon>Pentapetalae</taxon>
        <taxon>rosids</taxon>
        <taxon>malvids</taxon>
        <taxon>Brassicales</taxon>
        <taxon>Brassicaceae</taxon>
        <taxon>Camelineae</taxon>
        <taxon>Arabidopsis</taxon>
    </lineage>
</organism>